<sequence>MEALQRQQAARLAQGVGPLAPPRLPLPQPPLLGARTLQAPEGAIGVVGAEEEEGAEDEEGETPLAEEETAEQSHPGARCPNSPSSQSPGIQPHEWTYEEQFKQLYELDADPKRKEFLDDLFSFMQKRGTPVNRVPIMAKQVLDLYALFRLVTAKGGLVEVINRKVWREVTRGLSLPTTITSAAFTLRTQYMKYLYPYECETRALSSPGELQAAIDSNRREGRRQAYTAVPLFNLAGPTPRGAPGPASSHGPAPTATPNCPGPTQGSASGLPAHACAQLSPSPVKKEESGIPPPRLALPMGLASEATREKLAPEEPPEKRAVLMGPVDSPRLGAPPSFLPRGKAPLREERLDGPLNLAGSGISSINVALEINGVVYTGILFARRQPVPASLGPTNPPPLPSTGPPSSTLP</sequence>
<evidence type="ECO:0000250" key="1">
    <source>
        <dbReference type="UniProtKB" id="A6NKF2"/>
    </source>
</evidence>
<evidence type="ECO:0000255" key="2">
    <source>
        <dbReference type="PROSITE-ProRule" id="PRU00355"/>
    </source>
</evidence>
<evidence type="ECO:0000255" key="3">
    <source>
        <dbReference type="PROSITE-ProRule" id="PRU00819"/>
    </source>
</evidence>
<evidence type="ECO:0000256" key="4">
    <source>
        <dbReference type="SAM" id="MobiDB-lite"/>
    </source>
</evidence>
<evidence type="ECO:0000305" key="5"/>
<gene>
    <name type="primary">Arid3c</name>
</gene>
<organism>
    <name type="scientific">Mus musculus</name>
    <name type="common">Mouse</name>
    <dbReference type="NCBI Taxonomy" id="10090"/>
    <lineage>
        <taxon>Eukaryota</taxon>
        <taxon>Metazoa</taxon>
        <taxon>Chordata</taxon>
        <taxon>Craniata</taxon>
        <taxon>Vertebrata</taxon>
        <taxon>Euteleostomi</taxon>
        <taxon>Mammalia</taxon>
        <taxon>Eutheria</taxon>
        <taxon>Euarchontoglires</taxon>
        <taxon>Glires</taxon>
        <taxon>Rodentia</taxon>
        <taxon>Myomorpha</taxon>
        <taxon>Muroidea</taxon>
        <taxon>Muridae</taxon>
        <taxon>Murinae</taxon>
        <taxon>Mus</taxon>
        <taxon>Mus</taxon>
    </lineage>
</organism>
<comment type="function">
    <text evidence="1">Transcription factor involved in monocyte-to-macrophage differentiation. Forms a complex with NPM1 to translocate to the nucleus, acting as a transcription factor that promotes the expression of the genes involved in macrophage differentiation, such as STAT3, STAT1 and JUNB.</text>
</comment>
<comment type="subunit">
    <text evidence="1">Interacts (via REKLES DOMAIN) with NPM1; the interaction mediates ARID3C nuclear shuttling.</text>
</comment>
<comment type="subcellular location">
    <subcellularLocation>
        <location evidence="1">Nucleus</location>
    </subcellularLocation>
    <text evidence="1">Interaction with NPM1 mediates ARID3C nuclear shuttling.</text>
</comment>
<comment type="domain">
    <text evidence="1">REKLES domain is required for interaction with NPM1 and nuclear shuttling.</text>
</comment>
<comment type="sequence caution" evidence="5">
    <conflict type="erroneous gene model prediction">
        <sequence resource="EMBL-CDS" id="CAM16056"/>
    </conflict>
</comment>
<keyword id="KW-0238">DNA-binding</keyword>
<keyword id="KW-0539">Nucleus</keyword>
<keyword id="KW-1185">Reference proteome</keyword>
<keyword id="KW-0804">Transcription</keyword>
<keyword id="KW-0805">Transcription regulation</keyword>
<protein>
    <recommendedName>
        <fullName>AT-rich interactive domain-containing protein 3C</fullName>
        <shortName>ARID domain-containing protein 3C</shortName>
    </recommendedName>
</protein>
<dbReference type="EMBL" id="AL807796">
    <property type="protein sequence ID" value="CAM16056.2"/>
    <property type="status" value="ALT_SEQ"/>
    <property type="molecule type" value="Genomic_DNA"/>
</dbReference>
<dbReference type="EMBL" id="BC141237">
    <property type="protein sequence ID" value="AAI41238.1"/>
    <property type="molecule type" value="mRNA"/>
</dbReference>
<dbReference type="CCDS" id="CCDS38719.1"/>
<dbReference type="RefSeq" id="NP_001017362.1">
    <property type="nucleotide sequence ID" value="NM_001017362.3"/>
</dbReference>
<dbReference type="SMR" id="A6PWV5"/>
<dbReference type="FunCoup" id="A6PWV5">
    <property type="interactions" value="124"/>
</dbReference>
<dbReference type="STRING" id="10090.ENSMUSP00000127678"/>
<dbReference type="GlyGen" id="A6PWV5">
    <property type="glycosylation" value="3 sites"/>
</dbReference>
<dbReference type="PhosphoSitePlus" id="A6PWV5"/>
<dbReference type="PaxDb" id="10090-ENSMUSP00000127678"/>
<dbReference type="Antibodypedia" id="25532">
    <property type="antibodies" value="52 antibodies from 17 providers"/>
</dbReference>
<dbReference type="DNASU" id="550619"/>
<dbReference type="Ensembl" id="ENSMUST00000084698.12">
    <property type="protein sequence ID" value="ENSMUSP00000081748.6"/>
    <property type="gene ID" value="ENSMUSG00000066224.15"/>
</dbReference>
<dbReference type="Ensembl" id="ENSMUST00000171251.8">
    <property type="protein sequence ID" value="ENSMUSP00000127678.2"/>
    <property type="gene ID" value="ENSMUSG00000066224.15"/>
</dbReference>
<dbReference type="GeneID" id="550619"/>
<dbReference type="KEGG" id="mmu:550619"/>
<dbReference type="UCSC" id="uc008sjj.1">
    <property type="organism name" value="mouse"/>
</dbReference>
<dbReference type="AGR" id="MGI:3650624"/>
<dbReference type="CTD" id="138715"/>
<dbReference type="MGI" id="MGI:3650624">
    <property type="gene designation" value="Arid3c"/>
</dbReference>
<dbReference type="VEuPathDB" id="HostDB:ENSMUSG00000066224"/>
<dbReference type="eggNOG" id="KOG2744">
    <property type="taxonomic scope" value="Eukaryota"/>
</dbReference>
<dbReference type="GeneTree" id="ENSGT00940000160028"/>
<dbReference type="HOGENOM" id="CLU_026952_1_0_1"/>
<dbReference type="InParanoid" id="A6PWV5"/>
<dbReference type="OMA" id="RHAYTAT"/>
<dbReference type="OrthoDB" id="10044343at2759"/>
<dbReference type="PhylomeDB" id="A6PWV5"/>
<dbReference type="TreeFam" id="TF320364"/>
<dbReference type="BioGRID-ORCS" id="550619">
    <property type="hits" value="5 hits in 80 CRISPR screens"/>
</dbReference>
<dbReference type="PRO" id="PR:A6PWV5"/>
<dbReference type="Proteomes" id="UP000000589">
    <property type="component" value="Chromosome 4"/>
</dbReference>
<dbReference type="RNAct" id="A6PWV5">
    <property type="molecule type" value="protein"/>
</dbReference>
<dbReference type="Bgee" id="ENSMUSG00000066224">
    <property type="expression patterns" value="Expressed in secondary oocyte and 16 other cell types or tissues"/>
</dbReference>
<dbReference type="ExpressionAtlas" id="A6PWV5">
    <property type="expression patterns" value="baseline and differential"/>
</dbReference>
<dbReference type="GO" id="GO:0005737">
    <property type="term" value="C:cytoplasm"/>
    <property type="evidence" value="ECO:0000314"/>
    <property type="project" value="MGI"/>
</dbReference>
<dbReference type="GO" id="GO:0045121">
    <property type="term" value="C:membrane raft"/>
    <property type="evidence" value="ECO:0000266"/>
    <property type="project" value="MGI"/>
</dbReference>
<dbReference type="GO" id="GO:0005634">
    <property type="term" value="C:nucleus"/>
    <property type="evidence" value="ECO:0000314"/>
    <property type="project" value="MGI"/>
</dbReference>
<dbReference type="GO" id="GO:0003682">
    <property type="term" value="F:chromatin binding"/>
    <property type="evidence" value="ECO:0000314"/>
    <property type="project" value="MGI"/>
</dbReference>
<dbReference type="GO" id="GO:0003677">
    <property type="term" value="F:DNA binding"/>
    <property type="evidence" value="ECO:0007669"/>
    <property type="project" value="UniProtKB-KW"/>
</dbReference>
<dbReference type="GO" id="GO:0000981">
    <property type="term" value="F:DNA-binding transcription factor activity, RNA polymerase II-specific"/>
    <property type="evidence" value="ECO:0007669"/>
    <property type="project" value="Ensembl"/>
</dbReference>
<dbReference type="GO" id="GO:0030225">
    <property type="term" value="P:macrophage differentiation"/>
    <property type="evidence" value="ECO:0007669"/>
    <property type="project" value="Ensembl"/>
</dbReference>
<dbReference type="GO" id="GO:0045944">
    <property type="term" value="P:positive regulation of transcription by RNA polymerase II"/>
    <property type="evidence" value="ECO:0000316"/>
    <property type="project" value="MGI"/>
</dbReference>
<dbReference type="FunFam" id="1.10.150.60:FF:000007">
    <property type="entry name" value="AT-rich interactive domain-containing protein 3C"/>
    <property type="match status" value="1"/>
</dbReference>
<dbReference type="Gene3D" id="1.10.150.60">
    <property type="entry name" value="ARID DNA-binding domain"/>
    <property type="match status" value="1"/>
</dbReference>
<dbReference type="InterPro" id="IPR045147">
    <property type="entry name" value="ARI3A/B/C"/>
</dbReference>
<dbReference type="InterPro" id="IPR001606">
    <property type="entry name" value="ARID_dom"/>
</dbReference>
<dbReference type="InterPro" id="IPR036431">
    <property type="entry name" value="ARID_dom_sf"/>
</dbReference>
<dbReference type="InterPro" id="IPR023334">
    <property type="entry name" value="REKLES_domain"/>
</dbReference>
<dbReference type="PANTHER" id="PTHR15348:SF2">
    <property type="entry name" value="AT-RICH INTERACTIVE DOMAIN-CONTAINING PROTEIN 3C"/>
    <property type="match status" value="1"/>
</dbReference>
<dbReference type="PANTHER" id="PTHR15348">
    <property type="entry name" value="AT-RICH INTERACTIVE DOMAIN-CONTAINING PROTEIN ARID DOMAIN- CONTAINING PROTEIN DEAD RINGER PROTEIN B-CELL REGULATOR OF IGH TRANSCRIPTION BRIGHT"/>
    <property type="match status" value="1"/>
</dbReference>
<dbReference type="Pfam" id="PF01388">
    <property type="entry name" value="ARID"/>
    <property type="match status" value="1"/>
</dbReference>
<dbReference type="SMART" id="SM01014">
    <property type="entry name" value="ARID"/>
    <property type="match status" value="1"/>
</dbReference>
<dbReference type="SMART" id="SM00501">
    <property type="entry name" value="BRIGHT"/>
    <property type="match status" value="1"/>
</dbReference>
<dbReference type="SUPFAM" id="SSF46774">
    <property type="entry name" value="ARID-like"/>
    <property type="match status" value="1"/>
</dbReference>
<dbReference type="PROSITE" id="PS51011">
    <property type="entry name" value="ARID"/>
    <property type="match status" value="1"/>
</dbReference>
<dbReference type="PROSITE" id="PS51486">
    <property type="entry name" value="REKLES"/>
    <property type="match status" value="1"/>
</dbReference>
<feature type="chain" id="PRO_0000333002" description="AT-rich interactive domain-containing protein 3C">
    <location>
        <begin position="1"/>
        <end position="409"/>
    </location>
</feature>
<feature type="domain" description="ARID" evidence="2">
    <location>
        <begin position="110"/>
        <end position="202"/>
    </location>
</feature>
<feature type="domain" description="REKLES" evidence="3">
    <location>
        <begin position="301"/>
        <end position="386"/>
    </location>
</feature>
<feature type="region of interest" description="Disordered" evidence="4">
    <location>
        <begin position="1"/>
        <end position="91"/>
    </location>
</feature>
<feature type="region of interest" description="Disordered" evidence="4">
    <location>
        <begin position="233"/>
        <end position="274"/>
    </location>
</feature>
<feature type="region of interest" description="Disordered" evidence="4">
    <location>
        <begin position="306"/>
        <end position="333"/>
    </location>
</feature>
<feature type="region of interest" description="Disordered" evidence="4">
    <location>
        <begin position="385"/>
        <end position="409"/>
    </location>
</feature>
<feature type="compositionally biased region" description="Low complexity" evidence="4">
    <location>
        <begin position="1"/>
        <end position="14"/>
    </location>
</feature>
<feature type="compositionally biased region" description="Pro residues" evidence="4">
    <location>
        <begin position="19"/>
        <end position="30"/>
    </location>
</feature>
<feature type="compositionally biased region" description="Acidic residues" evidence="4">
    <location>
        <begin position="49"/>
        <end position="70"/>
    </location>
</feature>
<feature type="compositionally biased region" description="Low complexity" evidence="4">
    <location>
        <begin position="235"/>
        <end position="257"/>
    </location>
</feature>
<feature type="compositionally biased region" description="Basic and acidic residues" evidence="4">
    <location>
        <begin position="306"/>
        <end position="320"/>
    </location>
</feature>
<feature type="compositionally biased region" description="Pro residues" evidence="4">
    <location>
        <begin position="393"/>
        <end position="402"/>
    </location>
</feature>
<proteinExistence type="evidence at transcript level"/>
<accession>A6PWV5</accession>
<accession>B2RUN0</accession>
<name>ARI3C_MOUSE</name>
<reference key="1">
    <citation type="journal article" date="2009" name="PLoS Biol.">
        <title>Lineage-specific biology revealed by a finished genome assembly of the mouse.</title>
        <authorList>
            <person name="Church D.M."/>
            <person name="Goodstadt L."/>
            <person name="Hillier L.W."/>
            <person name="Zody M.C."/>
            <person name="Goldstein S."/>
            <person name="She X."/>
            <person name="Bult C.J."/>
            <person name="Agarwala R."/>
            <person name="Cherry J.L."/>
            <person name="DiCuccio M."/>
            <person name="Hlavina W."/>
            <person name="Kapustin Y."/>
            <person name="Meric P."/>
            <person name="Maglott D."/>
            <person name="Birtle Z."/>
            <person name="Marques A.C."/>
            <person name="Graves T."/>
            <person name="Zhou S."/>
            <person name="Teague B."/>
            <person name="Potamousis K."/>
            <person name="Churas C."/>
            <person name="Place M."/>
            <person name="Herschleb J."/>
            <person name="Runnheim R."/>
            <person name="Forrest D."/>
            <person name="Amos-Landgraf J."/>
            <person name="Schwartz D.C."/>
            <person name="Cheng Z."/>
            <person name="Lindblad-Toh K."/>
            <person name="Eichler E.E."/>
            <person name="Ponting C.P."/>
        </authorList>
    </citation>
    <scope>NUCLEOTIDE SEQUENCE [LARGE SCALE GENOMIC DNA]</scope>
    <source>
        <strain>C57BL/6J</strain>
    </source>
</reference>
<reference key="2">
    <citation type="journal article" date="2004" name="Genome Res.">
        <title>The status, quality, and expansion of the NIH full-length cDNA project: the Mammalian Gene Collection (MGC).</title>
        <authorList>
            <consortium name="The MGC Project Team"/>
        </authorList>
    </citation>
    <scope>NUCLEOTIDE SEQUENCE [LARGE SCALE MRNA]</scope>
    <source>
        <tissue>Brain</tissue>
    </source>
</reference>